<sequence length="304" mass="33088">MLIKTLENLVTEGRNKNTLQIDKEDTLGIIELINNEDKTVAYAVEEQKESIAKAVNIIVDRMKQGGRLFYIGAGTSGRIGILDATECPPTYGVDFELVQAIIAGGNQAIFKAIEGAEDDKELGKQDIIDRGVTSKDVICGIAASGRTPYVIGAMEYAKELGCAVLSITMNPNSEMSKKADLPINIIVGAEVIMGSTRMKSGTAQKMVCNMLTTASMVKMGKVYSNLMVDVKTSNEKLVERAKRIIMIATNVKYDVAEKFLEEADNSVKLAIFMIKSGLDKDSAKSILDRQEGYISEALKSIEKL</sequence>
<comment type="function">
    <text evidence="1">Specifically catalyzes the cleavage of the D-lactyl ether substituent of MurNAc 6-phosphate, producing GlcNAc 6-phosphate and D-lactate.</text>
</comment>
<comment type="catalytic activity">
    <reaction evidence="1">
        <text>N-acetyl-D-muramate 6-phosphate + H2O = N-acetyl-D-glucosamine 6-phosphate + (R)-lactate</text>
        <dbReference type="Rhea" id="RHEA:26410"/>
        <dbReference type="ChEBI" id="CHEBI:15377"/>
        <dbReference type="ChEBI" id="CHEBI:16004"/>
        <dbReference type="ChEBI" id="CHEBI:57513"/>
        <dbReference type="ChEBI" id="CHEBI:58722"/>
        <dbReference type="EC" id="4.2.1.126"/>
    </reaction>
</comment>
<comment type="pathway">
    <text evidence="1">Amino-sugar metabolism; N-acetylmuramate degradation.</text>
</comment>
<comment type="subunit">
    <text evidence="1">Homodimer.</text>
</comment>
<comment type="miscellaneous">
    <text evidence="1">A lyase-type mechanism (elimination/hydration) is suggested for the cleavage of the lactyl ether bond of MurNAc 6-phosphate, with the formation of an alpha,beta-unsaturated aldehyde intermediate with (E)-stereochemistry, followed by the syn addition of water to give product.</text>
</comment>
<comment type="similarity">
    <text evidence="1">Belongs to the GCKR-like family. MurNAc-6-P etherase subfamily.</text>
</comment>
<feature type="chain" id="PRO_1000009113" description="N-acetylmuramic acid 6-phosphate etherase">
    <location>
        <begin position="1"/>
        <end position="304"/>
    </location>
</feature>
<feature type="domain" description="SIS" evidence="1">
    <location>
        <begin position="58"/>
        <end position="221"/>
    </location>
</feature>
<feature type="active site" description="Proton donor" evidence="1">
    <location>
        <position position="86"/>
    </location>
</feature>
<feature type="active site" evidence="1">
    <location>
        <position position="117"/>
    </location>
</feature>
<reference key="1">
    <citation type="journal article" date="2006" name="Nat. Genet.">
        <title>The multidrug-resistant human pathogen Clostridium difficile has a highly mobile, mosaic genome.</title>
        <authorList>
            <person name="Sebaihia M."/>
            <person name="Wren B.W."/>
            <person name="Mullany P."/>
            <person name="Fairweather N.F."/>
            <person name="Minton N."/>
            <person name="Stabler R."/>
            <person name="Thomson N.R."/>
            <person name="Roberts A.P."/>
            <person name="Cerdeno-Tarraga A.M."/>
            <person name="Wang H."/>
            <person name="Holden M.T.G."/>
            <person name="Wright A."/>
            <person name="Churcher C."/>
            <person name="Quail M.A."/>
            <person name="Baker S."/>
            <person name="Bason N."/>
            <person name="Brooks K."/>
            <person name="Chillingworth T."/>
            <person name="Cronin A."/>
            <person name="Davis P."/>
            <person name="Dowd L."/>
            <person name="Fraser A."/>
            <person name="Feltwell T."/>
            <person name="Hance Z."/>
            <person name="Holroyd S."/>
            <person name="Jagels K."/>
            <person name="Moule S."/>
            <person name="Mungall K."/>
            <person name="Price C."/>
            <person name="Rabbinowitsch E."/>
            <person name="Sharp S."/>
            <person name="Simmonds M."/>
            <person name="Stevens K."/>
            <person name="Unwin L."/>
            <person name="Whithead S."/>
            <person name="Dupuy B."/>
            <person name="Dougan G."/>
            <person name="Barrell B."/>
            <person name="Parkhill J."/>
        </authorList>
    </citation>
    <scope>NUCLEOTIDE SEQUENCE [LARGE SCALE GENOMIC DNA]</scope>
    <source>
        <strain>630</strain>
    </source>
</reference>
<gene>
    <name evidence="1" type="primary">murQ</name>
    <name type="ordered locus">CD630_30460</name>
</gene>
<accession>Q184N3</accession>
<protein>
    <recommendedName>
        <fullName evidence="1">N-acetylmuramic acid 6-phosphate etherase</fullName>
        <shortName evidence="1">MurNAc-6-P etherase</shortName>
        <ecNumber evidence="1">4.2.1.126</ecNumber>
    </recommendedName>
    <alternativeName>
        <fullName evidence="1">N-acetylmuramic acid 6-phosphate hydrolase</fullName>
    </alternativeName>
    <alternativeName>
        <fullName evidence="1">N-acetylmuramic acid 6-phosphate lyase</fullName>
    </alternativeName>
</protein>
<name>MURQ_CLOD6</name>
<proteinExistence type="inferred from homology"/>
<dbReference type="EC" id="4.2.1.126" evidence="1"/>
<dbReference type="EMBL" id="AM180355">
    <property type="protein sequence ID" value="CAJ69939.1"/>
    <property type="molecule type" value="Genomic_DNA"/>
</dbReference>
<dbReference type="RefSeq" id="WP_003431390.1">
    <property type="nucleotide sequence ID" value="NZ_JAUPES010000008.1"/>
</dbReference>
<dbReference type="RefSeq" id="YP_001089561.1">
    <property type="nucleotide sequence ID" value="NC_009089.1"/>
</dbReference>
<dbReference type="SMR" id="Q184N3"/>
<dbReference type="STRING" id="272563.CD630_30460"/>
<dbReference type="EnsemblBacteria" id="CAJ69939">
    <property type="protein sequence ID" value="CAJ69939"/>
    <property type="gene ID" value="CD630_30460"/>
</dbReference>
<dbReference type="GeneID" id="66355444"/>
<dbReference type="KEGG" id="cdf:CD630_30460"/>
<dbReference type="KEGG" id="pdc:CDIF630_03330"/>
<dbReference type="PATRIC" id="fig|272563.120.peg.3212"/>
<dbReference type="eggNOG" id="COG2103">
    <property type="taxonomic scope" value="Bacteria"/>
</dbReference>
<dbReference type="OrthoDB" id="9813395at2"/>
<dbReference type="PhylomeDB" id="Q184N3"/>
<dbReference type="BioCyc" id="PDIF272563:G12WB-3208-MONOMER"/>
<dbReference type="UniPathway" id="UPA00342"/>
<dbReference type="Proteomes" id="UP000001978">
    <property type="component" value="Chromosome"/>
</dbReference>
<dbReference type="GO" id="GO:0097367">
    <property type="term" value="F:carbohydrate derivative binding"/>
    <property type="evidence" value="ECO:0007669"/>
    <property type="project" value="InterPro"/>
</dbReference>
<dbReference type="GO" id="GO:0016835">
    <property type="term" value="F:carbon-oxygen lyase activity"/>
    <property type="evidence" value="ECO:0007669"/>
    <property type="project" value="UniProtKB-UniRule"/>
</dbReference>
<dbReference type="GO" id="GO:0016803">
    <property type="term" value="F:ether hydrolase activity"/>
    <property type="evidence" value="ECO:0007669"/>
    <property type="project" value="TreeGrafter"/>
</dbReference>
<dbReference type="GO" id="GO:0046348">
    <property type="term" value="P:amino sugar catabolic process"/>
    <property type="evidence" value="ECO:0007669"/>
    <property type="project" value="InterPro"/>
</dbReference>
<dbReference type="GO" id="GO:0097173">
    <property type="term" value="P:N-acetylmuramic acid catabolic process"/>
    <property type="evidence" value="ECO:0007669"/>
    <property type="project" value="UniProtKB-UniPathway"/>
</dbReference>
<dbReference type="GO" id="GO:0009254">
    <property type="term" value="P:peptidoglycan turnover"/>
    <property type="evidence" value="ECO:0007669"/>
    <property type="project" value="TreeGrafter"/>
</dbReference>
<dbReference type="CDD" id="cd05007">
    <property type="entry name" value="SIS_Etherase"/>
    <property type="match status" value="1"/>
</dbReference>
<dbReference type="FunFam" id="1.10.8.1080:FF:000001">
    <property type="entry name" value="N-acetylmuramic acid 6-phosphate etherase"/>
    <property type="match status" value="1"/>
</dbReference>
<dbReference type="FunFam" id="3.40.50.10490:FF:000014">
    <property type="entry name" value="N-acetylmuramic acid 6-phosphate etherase"/>
    <property type="match status" value="1"/>
</dbReference>
<dbReference type="Gene3D" id="1.10.8.1080">
    <property type="match status" value="1"/>
</dbReference>
<dbReference type="Gene3D" id="3.40.50.10490">
    <property type="entry name" value="Glucose-6-phosphate isomerase like protein, domain 1"/>
    <property type="match status" value="1"/>
</dbReference>
<dbReference type="HAMAP" id="MF_00068">
    <property type="entry name" value="MurQ"/>
    <property type="match status" value="1"/>
</dbReference>
<dbReference type="InterPro" id="IPR005488">
    <property type="entry name" value="Etherase_MurQ"/>
</dbReference>
<dbReference type="InterPro" id="IPR005486">
    <property type="entry name" value="Glucokinase_regulatory_CS"/>
</dbReference>
<dbReference type="InterPro" id="IPR040190">
    <property type="entry name" value="MURQ/GCKR"/>
</dbReference>
<dbReference type="InterPro" id="IPR001347">
    <property type="entry name" value="SIS_dom"/>
</dbReference>
<dbReference type="InterPro" id="IPR046348">
    <property type="entry name" value="SIS_dom_sf"/>
</dbReference>
<dbReference type="NCBIfam" id="TIGR00274">
    <property type="entry name" value="N-acetylmuramic acid 6-phosphate etherase"/>
    <property type="match status" value="1"/>
</dbReference>
<dbReference type="NCBIfam" id="NF003915">
    <property type="entry name" value="PRK05441.1"/>
    <property type="match status" value="1"/>
</dbReference>
<dbReference type="NCBIfam" id="NF009222">
    <property type="entry name" value="PRK12570.1"/>
    <property type="match status" value="1"/>
</dbReference>
<dbReference type="PANTHER" id="PTHR10088">
    <property type="entry name" value="GLUCOKINASE REGULATORY PROTEIN"/>
    <property type="match status" value="1"/>
</dbReference>
<dbReference type="PANTHER" id="PTHR10088:SF4">
    <property type="entry name" value="GLUCOKINASE REGULATORY PROTEIN"/>
    <property type="match status" value="1"/>
</dbReference>
<dbReference type="Pfam" id="PF22645">
    <property type="entry name" value="GKRP_SIS_N"/>
    <property type="match status" value="1"/>
</dbReference>
<dbReference type="SUPFAM" id="SSF53697">
    <property type="entry name" value="SIS domain"/>
    <property type="match status" value="1"/>
</dbReference>
<dbReference type="PROSITE" id="PS01272">
    <property type="entry name" value="GCKR"/>
    <property type="match status" value="1"/>
</dbReference>
<dbReference type="PROSITE" id="PS51464">
    <property type="entry name" value="SIS"/>
    <property type="match status" value="1"/>
</dbReference>
<organism>
    <name type="scientific">Clostridioides difficile (strain 630)</name>
    <name type="common">Peptoclostridium difficile</name>
    <dbReference type="NCBI Taxonomy" id="272563"/>
    <lineage>
        <taxon>Bacteria</taxon>
        <taxon>Bacillati</taxon>
        <taxon>Bacillota</taxon>
        <taxon>Clostridia</taxon>
        <taxon>Peptostreptococcales</taxon>
        <taxon>Peptostreptococcaceae</taxon>
        <taxon>Clostridioides</taxon>
    </lineage>
</organism>
<keyword id="KW-0119">Carbohydrate metabolism</keyword>
<keyword id="KW-0456">Lyase</keyword>
<keyword id="KW-1185">Reference proteome</keyword>
<evidence type="ECO:0000255" key="1">
    <source>
        <dbReference type="HAMAP-Rule" id="MF_00068"/>
    </source>
</evidence>